<name>FTSY_HALVD</name>
<dbReference type="EC" id="3.6.5.4" evidence="1"/>
<dbReference type="EMBL" id="CP001956">
    <property type="protein sequence ID" value="ADE05025.1"/>
    <property type="molecule type" value="Genomic_DNA"/>
</dbReference>
<dbReference type="EMBL" id="AF439264">
    <property type="protein sequence ID" value="AAL30433.1"/>
    <property type="molecule type" value="Genomic_DNA"/>
</dbReference>
<dbReference type="RefSeq" id="WP_004045232.1">
    <property type="nucleotide sequence ID" value="NC_013967.1"/>
</dbReference>
<dbReference type="SMR" id="D4GYW6"/>
<dbReference type="STRING" id="309800.HVO_0120"/>
<dbReference type="PaxDb" id="309800-C498_18838"/>
<dbReference type="EnsemblBacteria" id="ADE05025">
    <property type="protein sequence ID" value="ADE05025"/>
    <property type="gene ID" value="HVO_0120"/>
</dbReference>
<dbReference type="GeneID" id="8924270"/>
<dbReference type="KEGG" id="hvo:HVO_0120"/>
<dbReference type="eggNOG" id="arCOG01227">
    <property type="taxonomic scope" value="Archaea"/>
</dbReference>
<dbReference type="HOGENOM" id="CLU_009301_3_1_2"/>
<dbReference type="OrthoDB" id="372188at2157"/>
<dbReference type="Proteomes" id="UP000008243">
    <property type="component" value="Chromosome"/>
</dbReference>
<dbReference type="GO" id="GO:0005737">
    <property type="term" value="C:cytoplasm"/>
    <property type="evidence" value="ECO:0007669"/>
    <property type="project" value="UniProtKB-SubCell"/>
</dbReference>
<dbReference type="GO" id="GO:0005886">
    <property type="term" value="C:plasma membrane"/>
    <property type="evidence" value="ECO:0007669"/>
    <property type="project" value="UniProtKB-SubCell"/>
</dbReference>
<dbReference type="GO" id="GO:0016887">
    <property type="term" value="F:ATP hydrolysis activity"/>
    <property type="evidence" value="ECO:0007669"/>
    <property type="project" value="InterPro"/>
</dbReference>
<dbReference type="GO" id="GO:0005525">
    <property type="term" value="F:GTP binding"/>
    <property type="evidence" value="ECO:0007669"/>
    <property type="project" value="UniProtKB-UniRule"/>
</dbReference>
<dbReference type="GO" id="GO:0003924">
    <property type="term" value="F:GTPase activity"/>
    <property type="evidence" value="ECO:0007669"/>
    <property type="project" value="UniProtKB-UniRule"/>
</dbReference>
<dbReference type="GO" id="GO:0005047">
    <property type="term" value="F:signal recognition particle binding"/>
    <property type="evidence" value="ECO:0007669"/>
    <property type="project" value="TreeGrafter"/>
</dbReference>
<dbReference type="GO" id="GO:0006614">
    <property type="term" value="P:SRP-dependent cotranslational protein targeting to membrane"/>
    <property type="evidence" value="ECO:0007669"/>
    <property type="project" value="InterPro"/>
</dbReference>
<dbReference type="FunFam" id="3.40.50.300:FF:000566">
    <property type="entry name" value="Signal recognition particle receptor subunit alpha"/>
    <property type="match status" value="1"/>
</dbReference>
<dbReference type="Gene3D" id="3.40.50.300">
    <property type="entry name" value="P-loop containing nucleotide triphosphate hydrolases"/>
    <property type="match status" value="1"/>
</dbReference>
<dbReference type="Gene3D" id="1.20.120.140">
    <property type="entry name" value="Signal recognition particle SRP54, nucleotide-binding domain"/>
    <property type="match status" value="1"/>
</dbReference>
<dbReference type="HAMAP" id="MF_00920">
    <property type="entry name" value="FtsY"/>
    <property type="match status" value="1"/>
</dbReference>
<dbReference type="InterPro" id="IPR003593">
    <property type="entry name" value="AAA+_ATPase"/>
</dbReference>
<dbReference type="InterPro" id="IPR027417">
    <property type="entry name" value="P-loop_NTPase"/>
</dbReference>
<dbReference type="InterPro" id="IPR013822">
    <property type="entry name" value="Signal_recog_particl_SRP54_hlx"/>
</dbReference>
<dbReference type="InterPro" id="IPR004390">
    <property type="entry name" value="SR_rcpt_FtsY"/>
</dbReference>
<dbReference type="InterPro" id="IPR036225">
    <property type="entry name" value="SRP/SRP_N"/>
</dbReference>
<dbReference type="InterPro" id="IPR000897">
    <property type="entry name" value="SRP54_GTPase_dom"/>
</dbReference>
<dbReference type="InterPro" id="IPR042101">
    <property type="entry name" value="SRP54_N_sf"/>
</dbReference>
<dbReference type="NCBIfam" id="TIGR00064">
    <property type="entry name" value="ftsY"/>
    <property type="match status" value="1"/>
</dbReference>
<dbReference type="PANTHER" id="PTHR43134">
    <property type="entry name" value="SIGNAL RECOGNITION PARTICLE RECEPTOR SUBUNIT ALPHA"/>
    <property type="match status" value="1"/>
</dbReference>
<dbReference type="PANTHER" id="PTHR43134:SF1">
    <property type="entry name" value="SIGNAL RECOGNITION PARTICLE RECEPTOR SUBUNIT ALPHA"/>
    <property type="match status" value="1"/>
</dbReference>
<dbReference type="Pfam" id="PF00448">
    <property type="entry name" value="SRP54"/>
    <property type="match status" value="1"/>
</dbReference>
<dbReference type="Pfam" id="PF02881">
    <property type="entry name" value="SRP54_N"/>
    <property type="match status" value="1"/>
</dbReference>
<dbReference type="SMART" id="SM00382">
    <property type="entry name" value="AAA"/>
    <property type="match status" value="1"/>
</dbReference>
<dbReference type="SMART" id="SM00962">
    <property type="entry name" value="SRP54"/>
    <property type="match status" value="1"/>
</dbReference>
<dbReference type="SMART" id="SM00963">
    <property type="entry name" value="SRP54_N"/>
    <property type="match status" value="1"/>
</dbReference>
<dbReference type="SUPFAM" id="SSF47364">
    <property type="entry name" value="Domain of the SRP/SRP receptor G-proteins"/>
    <property type="match status" value="1"/>
</dbReference>
<dbReference type="SUPFAM" id="SSF52540">
    <property type="entry name" value="P-loop containing nucleoside triphosphate hydrolases"/>
    <property type="match status" value="1"/>
</dbReference>
<dbReference type="PROSITE" id="PS00300">
    <property type="entry name" value="SRP54"/>
    <property type="match status" value="1"/>
</dbReference>
<reference key="1">
    <citation type="journal article" date="2010" name="PLoS ONE">
        <title>The complete genome sequence of Haloferax volcanii DS2, a model archaeon.</title>
        <authorList>
            <person name="Hartman A.L."/>
            <person name="Norais C."/>
            <person name="Badger J.H."/>
            <person name="Delmas S."/>
            <person name="Haldenby S."/>
            <person name="Madupu R."/>
            <person name="Robinson J."/>
            <person name="Khouri H."/>
            <person name="Ren Q."/>
            <person name="Lowe T.M."/>
            <person name="Maupin-Furlow J."/>
            <person name="Pohlschroder M."/>
            <person name="Daniels C."/>
            <person name="Pfeiffer F."/>
            <person name="Allers T."/>
            <person name="Eisen J.A."/>
        </authorList>
    </citation>
    <scope>NUCLEOTIDE SEQUENCE [LARGE SCALE GENOMIC DNA]</scope>
    <source>
        <strain>ATCC 29605 / DSM 3757 / JCM 8879 / NBRC 14742 / NCIMB 2012 / VKM B-1768 / DS2</strain>
    </source>
</reference>
<reference key="2">
    <citation type="journal article" date="2004" name="Eur. J. Biochem.">
        <title>Membrane binding of SRP pathway components in the halophilic archaea Haloferax volcanii.</title>
        <authorList>
            <person name="Lichi T."/>
            <person name="Ring G."/>
            <person name="Eichler J."/>
        </authorList>
    </citation>
    <scope>NUCLEOTIDE SEQUENCE [GENOMIC DNA] OF 191-456</scope>
    <scope>SUBCELLULAR LOCATION</scope>
    <source>
        <strain>ATCC 29605 / DSM 3757 / JCM 8879 / NBRC 14742 / NCIMB 2012 / VKM B-1768 / DS2</strain>
    </source>
</reference>
<gene>
    <name evidence="1" type="primary">ftsY</name>
    <name type="ordered locus">HVO_0120</name>
</gene>
<keyword id="KW-1003">Cell membrane</keyword>
<keyword id="KW-0963">Cytoplasm</keyword>
<keyword id="KW-0342">GTP-binding</keyword>
<keyword id="KW-0378">Hydrolase</keyword>
<keyword id="KW-0472">Membrane</keyword>
<keyword id="KW-0547">Nucleotide-binding</keyword>
<keyword id="KW-0675">Receptor</keyword>
<keyword id="KW-1185">Reference proteome</keyword>
<sequence length="456" mass="48187">MFDGLKKKLNRFRNDVEETAEEKAEAAADEAESDADAEAESAPADTDNAAVEPEASEPAAADPDADAVGDADAGSEADAVDAADAPADAESSSAAVEADAESESESAATPEPDSEVDAGADTGDEPSGEPTADEVEPRESLASDAAKAALTEEDEDDSSGPGRLRRAAAFATGKVVIEEEDLEDPLWELEMALLQSDVEMQVAEEILETIREKLIGETRKQVESTGQLVSEALHDALYEVISVGQFDFDQRIAEADKPVTLIFTGINGVGKTTTIAKLAKYFEKQGYSTVLANGDTYRAGANEQIREHAEALDKKLIAHEQGGDPAAVIYDGVEYAEAHDIDIVLGDTAGRLHTSNDLMAQLEKIDRVVGPDLTLFVDEAVAGQDAVERARQFNDAAAIDGAILTKADADSNGGAAISIAYVTGKPILFLGVGQGYDHIEKFDPEQMVERLLGEDE</sequence>
<feature type="chain" id="PRO_0000416704" description="Signal recognition particle receptor FtsY">
    <location>
        <begin position="1"/>
        <end position="456"/>
    </location>
</feature>
<feature type="region of interest" description="Disordered" evidence="2">
    <location>
        <begin position="1"/>
        <end position="163"/>
    </location>
</feature>
<feature type="compositionally biased region" description="Basic and acidic residues" evidence="2">
    <location>
        <begin position="1"/>
        <end position="26"/>
    </location>
</feature>
<feature type="compositionally biased region" description="Acidic residues" evidence="2">
    <location>
        <begin position="27"/>
        <end position="39"/>
    </location>
</feature>
<feature type="compositionally biased region" description="Low complexity" evidence="2">
    <location>
        <begin position="40"/>
        <end position="62"/>
    </location>
</feature>
<feature type="compositionally biased region" description="Acidic residues" evidence="2">
    <location>
        <begin position="63"/>
        <end position="81"/>
    </location>
</feature>
<feature type="compositionally biased region" description="Low complexity" evidence="2">
    <location>
        <begin position="82"/>
        <end position="97"/>
    </location>
</feature>
<feature type="compositionally biased region" description="Acidic residues" evidence="2">
    <location>
        <begin position="112"/>
        <end position="134"/>
    </location>
</feature>
<feature type="binding site" evidence="1">
    <location>
        <begin position="265"/>
        <end position="272"/>
    </location>
    <ligand>
        <name>GTP</name>
        <dbReference type="ChEBI" id="CHEBI:37565"/>
    </ligand>
</feature>
<feature type="binding site" evidence="1">
    <location>
        <begin position="347"/>
        <end position="351"/>
    </location>
    <ligand>
        <name>GTP</name>
        <dbReference type="ChEBI" id="CHEBI:37565"/>
    </ligand>
</feature>
<feature type="binding site" evidence="1">
    <location>
        <begin position="405"/>
        <end position="408"/>
    </location>
    <ligand>
        <name>GTP</name>
        <dbReference type="ChEBI" id="CHEBI:37565"/>
    </ligand>
</feature>
<organism>
    <name type="scientific">Haloferax volcanii (strain ATCC 29605 / DSM 3757 / JCM 8879 / NBRC 14742 / NCIMB 2012 / VKM B-1768 / DS2)</name>
    <name type="common">Halobacterium volcanii</name>
    <dbReference type="NCBI Taxonomy" id="309800"/>
    <lineage>
        <taxon>Archaea</taxon>
        <taxon>Methanobacteriati</taxon>
        <taxon>Methanobacteriota</taxon>
        <taxon>Stenosarchaea group</taxon>
        <taxon>Halobacteria</taxon>
        <taxon>Halobacteriales</taxon>
        <taxon>Haloferacaceae</taxon>
        <taxon>Haloferax</taxon>
    </lineage>
</organism>
<comment type="function">
    <text evidence="1">Involved in targeting and insertion of nascent membrane proteins into the cytoplasmic membrane. Acts as a receptor for the complex formed by the signal recognition particle (SRP) and the ribosome-nascent chain (RNC).</text>
</comment>
<comment type="catalytic activity">
    <reaction evidence="1">
        <text>GTP + H2O = GDP + phosphate + H(+)</text>
        <dbReference type="Rhea" id="RHEA:19669"/>
        <dbReference type="ChEBI" id="CHEBI:15377"/>
        <dbReference type="ChEBI" id="CHEBI:15378"/>
        <dbReference type="ChEBI" id="CHEBI:37565"/>
        <dbReference type="ChEBI" id="CHEBI:43474"/>
        <dbReference type="ChEBI" id="CHEBI:58189"/>
        <dbReference type="EC" id="3.6.5.4"/>
    </reaction>
</comment>
<comment type="subunit">
    <text evidence="1">Part of the signal recognition particle protein translocation system, which is composed of SRP and FtsY.</text>
</comment>
<comment type="subcellular location">
    <subcellularLocation>
        <location evidence="1 3">Cell membrane</location>
        <topology evidence="1 3">Peripheral membrane protein</topology>
        <orientation evidence="1 3">Cytoplasmic side</orientation>
    </subcellularLocation>
    <subcellularLocation>
        <location evidence="1 3">Cytoplasm</location>
    </subcellularLocation>
</comment>
<comment type="similarity">
    <text evidence="1">Belongs to the GTP-binding SRP family. FtsY subfamily.</text>
</comment>
<accession>D4GYW6</accession>
<accession>Q977F6</accession>
<evidence type="ECO:0000255" key="1">
    <source>
        <dbReference type="HAMAP-Rule" id="MF_00920"/>
    </source>
</evidence>
<evidence type="ECO:0000256" key="2">
    <source>
        <dbReference type="SAM" id="MobiDB-lite"/>
    </source>
</evidence>
<evidence type="ECO:0000269" key="3">
    <source>
    </source>
</evidence>
<proteinExistence type="inferred from homology"/>
<protein>
    <recommendedName>
        <fullName evidence="1">Signal recognition particle receptor FtsY</fullName>
        <shortName evidence="1">SRP receptor</shortName>
        <ecNumber evidence="1">3.6.5.4</ecNumber>
    </recommendedName>
</protein>